<sequence length="844" mass="94848">MAIEKLSPGMQQYVDIKKQYPDAFLLFRMGDFYELFYEDAVNAAQILEISLTSRNKNADNPIPMAGVPYHSAQQYIDVLIEQGYKVAIAEQMEDPKQAVGVVKREVVQVITPGTVVDSSKPDSQNNFLVSIDREGNQFGLAYMDLVTGDFYVTGLLDFTLVCGEIRNLKAREVVLGYDLSEEEEQILSRQMNLVLSYEKESFEDLHLLDLRLATVEQTASSKLLQYVHRTQMRELNHLKPVIRYEIKDFLQMDYATKASLDLVENARSGKKQGSLFWLLDETKTAMGMRLLRSWIHRPLIDKERIVQRQEVVQVFLDHFFERSDLTDSLKGVYDIERLASRVSFGKTNPKDLLQLATTLSSVPRIRAILEGMEQPTLAYLIAQLDAIPELESLISAAIAPEAPHVITDGGIIRTGFDETLDKYRCVLREGTSWIAEIEAKERENSGISTLKIDYNKKDGYYFHVTNSQLGNVPAHFFRKATLKNSERFGTEELARIEGDMLEAREKSANLEYEIFMRIREEVGKYIQRLQALAQGIATVDVLQSLAVVAETQHLIRPEFGDDSQIDIRKGRHAVVEKVMGAQTYIPNTIQMAEDTSIQLVTGPNMSGKSTYMRQLAMTAVMAQLGSYVPAESAHLPIFDAIFTRIGAADDLVSGQSTFMVEMMEANNAISHATKNSLILFDELGRGTATYDGMALAQSIIEYIHEHIGAKTLFATHYHELTSLESSLQHLVNVHVATLEQDGQVTFLHKIEPGPADKSYGIHVAKIAGLPADLLARADKILTQLENQGTESPPPMRQTSAVTEQISLFDRAEEHPILAELAKLDVYNMTPMQVMNVLVELKQKL</sequence>
<protein>
    <recommendedName>
        <fullName evidence="1">DNA mismatch repair protein MutS</fullName>
    </recommendedName>
</protein>
<gene>
    <name evidence="1" type="primary">mutS</name>
    <name type="ordered locus">SPJ_2098</name>
</gene>
<organism>
    <name type="scientific">Streptococcus pneumoniae (strain JJA)</name>
    <dbReference type="NCBI Taxonomy" id="488222"/>
    <lineage>
        <taxon>Bacteria</taxon>
        <taxon>Bacillati</taxon>
        <taxon>Bacillota</taxon>
        <taxon>Bacilli</taxon>
        <taxon>Lactobacillales</taxon>
        <taxon>Streptococcaceae</taxon>
        <taxon>Streptococcus</taxon>
    </lineage>
</organism>
<feature type="chain" id="PRO_1000192206" description="DNA mismatch repair protein MutS">
    <location>
        <begin position="1"/>
        <end position="844"/>
    </location>
</feature>
<feature type="binding site" evidence="1">
    <location>
        <begin position="602"/>
        <end position="609"/>
    </location>
    <ligand>
        <name>ATP</name>
        <dbReference type="ChEBI" id="CHEBI:30616"/>
    </ligand>
</feature>
<dbReference type="EMBL" id="CP000919">
    <property type="protein sequence ID" value="ACO18737.1"/>
    <property type="molecule type" value="Genomic_DNA"/>
</dbReference>
<dbReference type="RefSeq" id="WP_000963680.1">
    <property type="nucleotide sequence ID" value="NC_012466.1"/>
</dbReference>
<dbReference type="SMR" id="C1CH06"/>
<dbReference type="KEGG" id="sjj:SPJ_2098"/>
<dbReference type="HOGENOM" id="CLU_002472_3_1_9"/>
<dbReference type="Proteomes" id="UP000002206">
    <property type="component" value="Chromosome"/>
</dbReference>
<dbReference type="GO" id="GO:0005829">
    <property type="term" value="C:cytosol"/>
    <property type="evidence" value="ECO:0007669"/>
    <property type="project" value="TreeGrafter"/>
</dbReference>
<dbReference type="GO" id="GO:0005524">
    <property type="term" value="F:ATP binding"/>
    <property type="evidence" value="ECO:0007669"/>
    <property type="project" value="UniProtKB-UniRule"/>
</dbReference>
<dbReference type="GO" id="GO:0140664">
    <property type="term" value="F:ATP-dependent DNA damage sensor activity"/>
    <property type="evidence" value="ECO:0007669"/>
    <property type="project" value="InterPro"/>
</dbReference>
<dbReference type="GO" id="GO:0003684">
    <property type="term" value="F:damaged DNA binding"/>
    <property type="evidence" value="ECO:0007669"/>
    <property type="project" value="UniProtKB-UniRule"/>
</dbReference>
<dbReference type="GO" id="GO:0030983">
    <property type="term" value="F:mismatched DNA binding"/>
    <property type="evidence" value="ECO:0007669"/>
    <property type="project" value="InterPro"/>
</dbReference>
<dbReference type="GO" id="GO:0006298">
    <property type="term" value="P:mismatch repair"/>
    <property type="evidence" value="ECO:0007669"/>
    <property type="project" value="UniProtKB-UniRule"/>
</dbReference>
<dbReference type="CDD" id="cd03284">
    <property type="entry name" value="ABC_MutS1"/>
    <property type="match status" value="1"/>
</dbReference>
<dbReference type="FunFam" id="1.10.1420.10:FF:000018">
    <property type="entry name" value="DNA mismatch repair protein MutS"/>
    <property type="match status" value="1"/>
</dbReference>
<dbReference type="FunFam" id="3.30.420.110:FF:000015">
    <property type="entry name" value="DNA mismatch repair protein MutS"/>
    <property type="match status" value="1"/>
</dbReference>
<dbReference type="FunFam" id="3.40.1170.10:FF:000001">
    <property type="entry name" value="DNA mismatch repair protein MutS"/>
    <property type="match status" value="1"/>
</dbReference>
<dbReference type="FunFam" id="3.40.50.300:FF:000896">
    <property type="entry name" value="DNA mismatch repair protein MutS"/>
    <property type="match status" value="1"/>
</dbReference>
<dbReference type="Gene3D" id="1.10.1420.10">
    <property type="match status" value="2"/>
</dbReference>
<dbReference type="Gene3D" id="3.40.1170.10">
    <property type="entry name" value="DNA repair protein MutS, domain I"/>
    <property type="match status" value="1"/>
</dbReference>
<dbReference type="Gene3D" id="3.30.420.110">
    <property type="entry name" value="MutS, connector domain"/>
    <property type="match status" value="1"/>
</dbReference>
<dbReference type="Gene3D" id="3.40.50.300">
    <property type="entry name" value="P-loop containing nucleotide triphosphate hydrolases"/>
    <property type="match status" value="1"/>
</dbReference>
<dbReference type="HAMAP" id="MF_00096">
    <property type="entry name" value="MutS"/>
    <property type="match status" value="1"/>
</dbReference>
<dbReference type="InterPro" id="IPR005748">
    <property type="entry name" value="DNA_mismatch_repair_MutS"/>
</dbReference>
<dbReference type="InterPro" id="IPR007695">
    <property type="entry name" value="DNA_mismatch_repair_MutS-lik_N"/>
</dbReference>
<dbReference type="InterPro" id="IPR017261">
    <property type="entry name" value="DNA_mismatch_repair_MutS/MSH"/>
</dbReference>
<dbReference type="InterPro" id="IPR000432">
    <property type="entry name" value="DNA_mismatch_repair_MutS_C"/>
</dbReference>
<dbReference type="InterPro" id="IPR007861">
    <property type="entry name" value="DNA_mismatch_repair_MutS_clamp"/>
</dbReference>
<dbReference type="InterPro" id="IPR007696">
    <property type="entry name" value="DNA_mismatch_repair_MutS_core"/>
</dbReference>
<dbReference type="InterPro" id="IPR016151">
    <property type="entry name" value="DNA_mismatch_repair_MutS_N"/>
</dbReference>
<dbReference type="InterPro" id="IPR036187">
    <property type="entry name" value="DNA_mismatch_repair_MutS_sf"/>
</dbReference>
<dbReference type="InterPro" id="IPR007860">
    <property type="entry name" value="DNA_mmatch_repair_MutS_con_dom"/>
</dbReference>
<dbReference type="InterPro" id="IPR045076">
    <property type="entry name" value="MutS"/>
</dbReference>
<dbReference type="InterPro" id="IPR036678">
    <property type="entry name" value="MutS_con_dom_sf"/>
</dbReference>
<dbReference type="InterPro" id="IPR027417">
    <property type="entry name" value="P-loop_NTPase"/>
</dbReference>
<dbReference type="NCBIfam" id="TIGR01070">
    <property type="entry name" value="mutS1"/>
    <property type="match status" value="1"/>
</dbReference>
<dbReference type="NCBIfam" id="NF003810">
    <property type="entry name" value="PRK05399.1"/>
    <property type="match status" value="1"/>
</dbReference>
<dbReference type="PANTHER" id="PTHR11361:SF34">
    <property type="entry name" value="DNA MISMATCH REPAIR PROTEIN MSH1, MITOCHONDRIAL"/>
    <property type="match status" value="1"/>
</dbReference>
<dbReference type="PANTHER" id="PTHR11361">
    <property type="entry name" value="DNA MISMATCH REPAIR PROTEIN MUTS FAMILY MEMBER"/>
    <property type="match status" value="1"/>
</dbReference>
<dbReference type="Pfam" id="PF01624">
    <property type="entry name" value="MutS_I"/>
    <property type="match status" value="1"/>
</dbReference>
<dbReference type="Pfam" id="PF05188">
    <property type="entry name" value="MutS_II"/>
    <property type="match status" value="1"/>
</dbReference>
<dbReference type="Pfam" id="PF05192">
    <property type="entry name" value="MutS_III"/>
    <property type="match status" value="1"/>
</dbReference>
<dbReference type="Pfam" id="PF05190">
    <property type="entry name" value="MutS_IV"/>
    <property type="match status" value="1"/>
</dbReference>
<dbReference type="Pfam" id="PF00488">
    <property type="entry name" value="MutS_V"/>
    <property type="match status" value="1"/>
</dbReference>
<dbReference type="PIRSF" id="PIRSF037677">
    <property type="entry name" value="DNA_mis_repair_Msh6"/>
    <property type="match status" value="1"/>
</dbReference>
<dbReference type="SMART" id="SM00534">
    <property type="entry name" value="MUTSac"/>
    <property type="match status" value="1"/>
</dbReference>
<dbReference type="SMART" id="SM00533">
    <property type="entry name" value="MUTSd"/>
    <property type="match status" value="1"/>
</dbReference>
<dbReference type="SUPFAM" id="SSF55271">
    <property type="entry name" value="DNA repair protein MutS, domain I"/>
    <property type="match status" value="1"/>
</dbReference>
<dbReference type="SUPFAM" id="SSF53150">
    <property type="entry name" value="DNA repair protein MutS, domain II"/>
    <property type="match status" value="1"/>
</dbReference>
<dbReference type="SUPFAM" id="SSF48334">
    <property type="entry name" value="DNA repair protein MutS, domain III"/>
    <property type="match status" value="1"/>
</dbReference>
<dbReference type="SUPFAM" id="SSF52540">
    <property type="entry name" value="P-loop containing nucleoside triphosphate hydrolases"/>
    <property type="match status" value="1"/>
</dbReference>
<dbReference type="PROSITE" id="PS00486">
    <property type="entry name" value="DNA_MISMATCH_REPAIR_2"/>
    <property type="match status" value="1"/>
</dbReference>
<reference key="1">
    <citation type="journal article" date="2010" name="Genome Biol.">
        <title>Structure and dynamics of the pan-genome of Streptococcus pneumoniae and closely related species.</title>
        <authorList>
            <person name="Donati C."/>
            <person name="Hiller N.L."/>
            <person name="Tettelin H."/>
            <person name="Muzzi A."/>
            <person name="Croucher N.J."/>
            <person name="Angiuoli S.V."/>
            <person name="Oggioni M."/>
            <person name="Dunning Hotopp J.C."/>
            <person name="Hu F.Z."/>
            <person name="Riley D.R."/>
            <person name="Covacci A."/>
            <person name="Mitchell T.J."/>
            <person name="Bentley S.D."/>
            <person name="Kilian M."/>
            <person name="Ehrlich G.D."/>
            <person name="Rappuoli R."/>
            <person name="Moxon E.R."/>
            <person name="Masignani V."/>
        </authorList>
    </citation>
    <scope>NUCLEOTIDE SEQUENCE [LARGE SCALE GENOMIC DNA]</scope>
    <source>
        <strain>JJA</strain>
    </source>
</reference>
<keyword id="KW-0067">ATP-binding</keyword>
<keyword id="KW-0227">DNA damage</keyword>
<keyword id="KW-0234">DNA repair</keyword>
<keyword id="KW-0238">DNA-binding</keyword>
<keyword id="KW-0547">Nucleotide-binding</keyword>
<comment type="function">
    <text evidence="1">This protein is involved in the repair of mismatches in DNA. It is possible that it carries out the mismatch recognition step. This protein has a weak ATPase activity.</text>
</comment>
<comment type="similarity">
    <text evidence="1">Belongs to the DNA mismatch repair MutS family.</text>
</comment>
<evidence type="ECO:0000255" key="1">
    <source>
        <dbReference type="HAMAP-Rule" id="MF_00096"/>
    </source>
</evidence>
<proteinExistence type="inferred from homology"/>
<accession>C1CH06</accession>
<name>MUTS_STRZJ</name>